<reference key="1">
    <citation type="journal article" date="2004" name="J. Biol. Chem.">
        <title>Purification of the Arabidopsis 26 S proteasome: biochemical and molecular analyses revealed the presence of multiple isoforms.</title>
        <authorList>
            <person name="Yang P."/>
            <person name="Fu H."/>
            <person name="Walker J."/>
            <person name="Papa C.M."/>
            <person name="Smalle J."/>
            <person name="Ju Y.-M."/>
            <person name="Vierstra R.D."/>
        </authorList>
    </citation>
    <scope>NUCLEOTIDE SEQUENCE [MRNA]</scope>
    <scope>SUBUNIT</scope>
    <scope>IDENTIFICATION BY MASS SPECTROMETRY</scope>
    <scope>TISSUE SPECIFICITY</scope>
    <source>
        <strain>cv. Columbia</strain>
    </source>
</reference>
<reference key="2">
    <citation type="journal article" date="1998" name="DNA Res.">
        <title>Structural analysis of Arabidopsis thaliana chromosome 5. VIII. Sequence features of the regions of 1,081,958 bp covered by seventeen physically assigned P1 and TAC clones.</title>
        <authorList>
            <person name="Asamizu E."/>
            <person name="Sato S."/>
            <person name="Kaneko T."/>
            <person name="Nakamura Y."/>
            <person name="Kotani H."/>
            <person name="Miyajima N."/>
            <person name="Tabata S."/>
        </authorList>
    </citation>
    <scope>NUCLEOTIDE SEQUENCE [LARGE SCALE GENOMIC DNA]</scope>
    <source>
        <strain>cv. Columbia</strain>
    </source>
</reference>
<reference key="3">
    <citation type="journal article" date="2017" name="Plant J.">
        <title>Araport11: a complete reannotation of the Arabidopsis thaliana reference genome.</title>
        <authorList>
            <person name="Cheng C.Y."/>
            <person name="Krishnakumar V."/>
            <person name="Chan A.P."/>
            <person name="Thibaud-Nissen F."/>
            <person name="Schobel S."/>
            <person name="Town C.D."/>
        </authorList>
    </citation>
    <scope>GENOME REANNOTATION</scope>
    <source>
        <strain>cv. Columbia</strain>
    </source>
</reference>
<reference key="4">
    <citation type="journal article" date="2003" name="Science">
        <title>Empirical analysis of transcriptional activity in the Arabidopsis genome.</title>
        <authorList>
            <person name="Yamada K."/>
            <person name="Lim J."/>
            <person name="Dale J.M."/>
            <person name="Chen H."/>
            <person name="Shinn P."/>
            <person name="Palm C.J."/>
            <person name="Southwick A.M."/>
            <person name="Wu H.C."/>
            <person name="Kim C.J."/>
            <person name="Nguyen M."/>
            <person name="Pham P.K."/>
            <person name="Cheuk R.F."/>
            <person name="Karlin-Newmann G."/>
            <person name="Liu S.X."/>
            <person name="Lam B."/>
            <person name="Sakano H."/>
            <person name="Wu T."/>
            <person name="Yu G."/>
            <person name="Miranda M."/>
            <person name="Quach H.L."/>
            <person name="Tripp M."/>
            <person name="Chang C.H."/>
            <person name="Lee J.M."/>
            <person name="Toriumi M.J."/>
            <person name="Chan M.M."/>
            <person name="Tang C.C."/>
            <person name="Onodera C.S."/>
            <person name="Deng J.M."/>
            <person name="Akiyama K."/>
            <person name="Ansari Y."/>
            <person name="Arakawa T."/>
            <person name="Banh J."/>
            <person name="Banno F."/>
            <person name="Bowser L."/>
            <person name="Brooks S.Y."/>
            <person name="Carninci P."/>
            <person name="Chao Q."/>
            <person name="Choy N."/>
            <person name="Enju A."/>
            <person name="Goldsmith A.D."/>
            <person name="Gurjal M."/>
            <person name="Hansen N.F."/>
            <person name="Hayashizaki Y."/>
            <person name="Johnson-Hopson C."/>
            <person name="Hsuan V.W."/>
            <person name="Iida K."/>
            <person name="Karnes M."/>
            <person name="Khan S."/>
            <person name="Koesema E."/>
            <person name="Ishida J."/>
            <person name="Jiang P.X."/>
            <person name="Jones T."/>
            <person name="Kawai J."/>
            <person name="Kamiya A."/>
            <person name="Meyers C."/>
            <person name="Nakajima M."/>
            <person name="Narusaka M."/>
            <person name="Seki M."/>
            <person name="Sakurai T."/>
            <person name="Satou M."/>
            <person name="Tamse R."/>
            <person name="Vaysberg M."/>
            <person name="Wallender E.K."/>
            <person name="Wong C."/>
            <person name="Yamamura Y."/>
            <person name="Yuan S."/>
            <person name="Shinozaki K."/>
            <person name="Davis R.W."/>
            <person name="Theologis A."/>
            <person name="Ecker J.R."/>
        </authorList>
    </citation>
    <scope>NUCLEOTIDE SEQUENCE [LARGE SCALE MRNA]</scope>
    <source>
        <strain>cv. Columbia</strain>
    </source>
</reference>
<reference key="5">
    <citation type="journal article" date="2009" name="Plant Cell">
        <title>The RPN5 subunit of the 26s proteasome is essential for gametogenesis, sporophyte development, and complex assembly in Arabidopsis.</title>
        <authorList>
            <person name="Book A.J."/>
            <person name="Smalle J."/>
            <person name="Lee K.H."/>
            <person name="Yang P."/>
            <person name="Walker J.M."/>
            <person name="Casper S."/>
            <person name="Holmes J.H."/>
            <person name="Russo L.A."/>
            <person name="Buzzinotti Z.W."/>
            <person name="Jenik P.D."/>
            <person name="Vierstra R.D."/>
        </authorList>
    </citation>
    <scope>DISRUPTION PHENOTYPE</scope>
    <scope>FUNCTION</scope>
    <scope>SUBCELLULAR LOCATION</scope>
</reference>
<reference key="6">
    <citation type="journal article" date="2010" name="J. Biol. Chem.">
        <title>Affinity purification of the Arabidopsis 26 S proteasome reveals a diverse array of plant proteolytic complexes.</title>
        <authorList>
            <person name="Book A.J."/>
            <person name="Gladman N.P."/>
            <person name="Lee S.S."/>
            <person name="Scalf M."/>
            <person name="Smith L.M."/>
            <person name="Vierstra R.D."/>
        </authorList>
    </citation>
    <scope>IDENTIFICATION BY MASS SPECTROMETRY</scope>
    <scope>CHARACTERIZATION OF THE 26S PROTEASOME COMPLEX</scope>
    <scope>SUBUNIT</scope>
    <scope>CLEAVAGE OF INITIATOR METHIONINE</scope>
</reference>
<comment type="function">
    <text evidence="4">Acts as a regulatory subunit of the 26 proteasome which is involved in the ATP-dependent degradation of ubiquitinated proteins. Required for gametogenesis and sporophyte development. Acts redundantly with RPN5B.</text>
</comment>
<comment type="subunit">
    <text evidence="3 5">Component of the 19S regulatory particle (RP/PA700) lid subcomplex of the 26S proteasome. The 26S proteasome is composed of a core protease (CP), known as the 20S proteasome, capped at one or both ends by the 19S regulatory particle (RP/PA700). The RP/PA700 complex is composed of at least 17 different subunits in two subcomplexes, the base and the lid, which form the portions proximal and distal to the 20S proteolytic core, respectively.</text>
</comment>
<comment type="subcellular location">
    <subcellularLocation>
        <location evidence="4">Cytoplasm</location>
    </subcellularLocation>
    <subcellularLocation>
        <location evidence="4">Nucleus</location>
    </subcellularLocation>
</comment>
<comment type="alternative products">
    <event type="alternative splicing"/>
    <isoform>
        <id>Q9FIB6-1</id>
        <name>1</name>
        <sequence type="displayed"/>
    </isoform>
    <text>A number of isoforms are produced. According to EST sequences.</text>
</comment>
<comment type="tissue specificity">
    <text evidence="3">Ubiquitous with highest expression in flowers.</text>
</comment>
<comment type="disruption phenotype">
    <text evidence="4">Displays a host of morphogenetic defects, including abnormal embryogenesis, partially deetiolated development in the dark, a severely dwarfed phenotype when grown in the light, and infertility.</text>
</comment>
<comment type="similarity">
    <text evidence="6">Belongs to the proteasome subunit p55 family.</text>
</comment>
<feature type="initiator methionine" description="Removed" evidence="7">
    <location>
        <position position="1"/>
    </location>
</feature>
<feature type="chain" id="PRO_0000423171" description="26S proteasome non-ATPase regulatory subunit 12 homolog A">
    <location>
        <begin position="2"/>
        <end position="442"/>
    </location>
</feature>
<feature type="domain" description="PCI" evidence="2">
    <location>
        <begin position="232"/>
        <end position="403"/>
    </location>
</feature>
<feature type="coiled-coil region" evidence="1">
    <location>
        <begin position="6"/>
        <end position="137"/>
    </location>
</feature>
<evidence type="ECO:0000255" key="1"/>
<evidence type="ECO:0000255" key="2">
    <source>
        <dbReference type="PROSITE-ProRule" id="PRU01185"/>
    </source>
</evidence>
<evidence type="ECO:0000269" key="3">
    <source>
    </source>
</evidence>
<evidence type="ECO:0000269" key="4">
    <source>
    </source>
</evidence>
<evidence type="ECO:0000269" key="5">
    <source>
    </source>
</evidence>
<evidence type="ECO:0000305" key="6"/>
<evidence type="ECO:0000305" key="7">
    <source>
    </source>
</evidence>
<keyword id="KW-0025">Alternative splicing</keyword>
<keyword id="KW-0175">Coiled coil</keyword>
<keyword id="KW-0963">Cytoplasm</keyword>
<keyword id="KW-0539">Nucleus</keyword>
<keyword id="KW-0647">Proteasome</keyword>
<keyword id="KW-1185">Reference proteome</keyword>
<sequence>MGDSGKLEATIDRLLNEEKQMRLAENVAGTRKAATEILQLCFDAKDWKLLNEQILNLSKKRGQLKQAVQSMVQQAMQYIDQTPDIETRIELIKTLNNVSAGKIYVEIERARLTKKLAKIKEEQGQIAEAADLMQEVAVETFGAMAKTEKIAFILEQVRLCLDRQDFVRAQILSRKINPRVFDADTKKDKKKPKEGDNMVEEAPADIPTLLELKRIYYELMIRYYSHNNEYIEICRSYKAIYDIPSVKETPEQWIPVLRKICWFLVLAPHDPMQSSLLNATLEDKNLSEIPDFKMLLKQVVTMEVIQWTSLWNKYKDEFEKEKSMIGGSLGDKAGEDLKLRIIEHNILVVSKYYARITLKRLAELLCLSMEEAEKHLSEMVVSKALIAKIDRPSGIVCFQIAKDSNEILNSWAGNLEKLLDLVEKSCHQIHKETMVHKAALRP</sequence>
<dbReference type="EMBL" id="AY230832">
    <property type="protein sequence ID" value="AAP86659.1"/>
    <property type="molecule type" value="mRNA"/>
</dbReference>
<dbReference type="EMBL" id="AB016893">
    <property type="protein sequence ID" value="BAB09411.1"/>
    <property type="molecule type" value="Genomic_DNA"/>
</dbReference>
<dbReference type="EMBL" id="CP002688">
    <property type="protein sequence ID" value="AED91463.1"/>
    <property type="molecule type" value="Genomic_DNA"/>
</dbReference>
<dbReference type="EMBL" id="AY034908">
    <property type="protein sequence ID" value="AAK59415.1"/>
    <property type="molecule type" value="mRNA"/>
</dbReference>
<dbReference type="EMBL" id="AY113906">
    <property type="protein sequence ID" value="AAM44954.1"/>
    <property type="molecule type" value="mRNA"/>
</dbReference>
<dbReference type="RefSeq" id="NP_196552.1">
    <molecule id="Q9FIB6-1"/>
    <property type="nucleotide sequence ID" value="NM_121027.4"/>
</dbReference>
<dbReference type="SMR" id="Q9FIB6"/>
<dbReference type="BioGRID" id="16128">
    <property type="interactions" value="103"/>
</dbReference>
<dbReference type="FunCoup" id="Q9FIB6">
    <property type="interactions" value="5062"/>
</dbReference>
<dbReference type="IntAct" id="Q9FIB6">
    <property type="interactions" value="2"/>
</dbReference>
<dbReference type="STRING" id="3702.Q9FIB6"/>
<dbReference type="EnsemblPlants" id="AT5G09900.1">
    <molecule id="Q9FIB6-1"/>
    <property type="protein sequence ID" value="AT5G09900.1"/>
    <property type="gene ID" value="AT5G09900"/>
</dbReference>
<dbReference type="GeneID" id="830850"/>
<dbReference type="Gramene" id="AT5G09900.1">
    <molecule id="Q9FIB6-1"/>
    <property type="protein sequence ID" value="AT5G09900.1"/>
    <property type="gene ID" value="AT5G09900"/>
</dbReference>
<dbReference type="KEGG" id="ath:AT5G09900"/>
<dbReference type="Araport" id="AT5G09900"/>
<dbReference type="TAIR" id="AT5G09900">
    <property type="gene designation" value="EMB2107"/>
</dbReference>
<dbReference type="HOGENOM" id="CLU_033860_1_0_1"/>
<dbReference type="InParanoid" id="Q9FIB6"/>
<dbReference type="PhylomeDB" id="Q9FIB6"/>
<dbReference type="CD-CODE" id="4299E36E">
    <property type="entry name" value="Nucleolus"/>
</dbReference>
<dbReference type="PRO" id="PR:Q9FIB6"/>
<dbReference type="Proteomes" id="UP000006548">
    <property type="component" value="Chromosome 5"/>
</dbReference>
<dbReference type="ExpressionAtlas" id="Q9FIB6">
    <property type="expression patterns" value="baseline and differential"/>
</dbReference>
<dbReference type="GO" id="GO:0005737">
    <property type="term" value="C:cytoplasm"/>
    <property type="evidence" value="ECO:0007669"/>
    <property type="project" value="UniProtKB-SubCell"/>
</dbReference>
<dbReference type="GO" id="GO:0005634">
    <property type="term" value="C:nucleus"/>
    <property type="evidence" value="ECO:0007669"/>
    <property type="project" value="UniProtKB-SubCell"/>
</dbReference>
<dbReference type="GO" id="GO:0000502">
    <property type="term" value="C:proteasome complex"/>
    <property type="evidence" value="ECO:0007669"/>
    <property type="project" value="UniProtKB-KW"/>
</dbReference>
<dbReference type="FunFam" id="1.10.10.10:FF:000070">
    <property type="entry name" value="26S proteasome non-ATPase regulatory subunit 12"/>
    <property type="match status" value="1"/>
</dbReference>
<dbReference type="Gene3D" id="1.10.10.10">
    <property type="entry name" value="Winged helix-like DNA-binding domain superfamily/Winged helix DNA-binding domain"/>
    <property type="match status" value="1"/>
</dbReference>
<dbReference type="InterPro" id="IPR000717">
    <property type="entry name" value="PCI_dom"/>
</dbReference>
<dbReference type="InterPro" id="IPR054559">
    <property type="entry name" value="PSMD12-CSN4-like_N"/>
</dbReference>
<dbReference type="InterPro" id="IPR040134">
    <property type="entry name" value="PSMD12/CSN4"/>
</dbReference>
<dbReference type="InterPro" id="IPR040896">
    <property type="entry name" value="RPN5_C"/>
</dbReference>
<dbReference type="InterPro" id="IPR036388">
    <property type="entry name" value="WH-like_DNA-bd_sf"/>
</dbReference>
<dbReference type="InterPro" id="IPR036390">
    <property type="entry name" value="WH_DNA-bd_sf"/>
</dbReference>
<dbReference type="PANTHER" id="PTHR10855:SF1">
    <property type="entry name" value="26S PROTEASOME NON-ATPASE REGULATORY SUBUNIT 12"/>
    <property type="match status" value="1"/>
</dbReference>
<dbReference type="PANTHER" id="PTHR10855">
    <property type="entry name" value="26S PROTEASOME NON-ATPASE REGULATORY SUBUNIT 12/COP9 SIGNALOSOME COMPLEX SUBUNIT 4"/>
    <property type="match status" value="1"/>
</dbReference>
<dbReference type="Pfam" id="PF01399">
    <property type="entry name" value="PCI"/>
    <property type="match status" value="1"/>
</dbReference>
<dbReference type="Pfam" id="PF22241">
    <property type="entry name" value="PSMD12-CSN4_N"/>
    <property type="match status" value="2"/>
</dbReference>
<dbReference type="Pfam" id="PF18098">
    <property type="entry name" value="RPN5_C"/>
    <property type="match status" value="1"/>
</dbReference>
<dbReference type="SMART" id="SM00088">
    <property type="entry name" value="PINT"/>
    <property type="match status" value="1"/>
</dbReference>
<dbReference type="SUPFAM" id="SSF46785">
    <property type="entry name" value="Winged helix' DNA-binding domain"/>
    <property type="match status" value="1"/>
</dbReference>
<dbReference type="PROSITE" id="PS50250">
    <property type="entry name" value="PCI"/>
    <property type="match status" value="1"/>
</dbReference>
<name>PS12A_ARATH</name>
<protein>
    <recommendedName>
        <fullName>26S proteasome non-ATPase regulatory subunit 12 homolog A</fullName>
    </recommendedName>
    <alternativeName>
        <fullName>26S proteasome regulatory subunit RPN5a</fullName>
        <shortName>AtRPN5a</shortName>
    </alternativeName>
    <alternativeName>
        <fullName>26S proteasome regulatory subunit p55 homolog A</fullName>
    </alternativeName>
    <alternativeName>
        <fullName>Protein EMBRYO DEFECTIVE 2107</fullName>
    </alternativeName>
    <alternativeName>
        <fullName>Protein MARIPOSA</fullName>
    </alternativeName>
</protein>
<gene>
    <name type="primary">RPN5A</name>
    <name type="synonym">EMB2107</name>
    <name type="synonym">MSA</name>
    <name type="ordered locus">At5g09900</name>
    <name type="ORF">MYH9.11</name>
</gene>
<accession>Q9FIB6</accession>
<organism>
    <name type="scientific">Arabidopsis thaliana</name>
    <name type="common">Mouse-ear cress</name>
    <dbReference type="NCBI Taxonomy" id="3702"/>
    <lineage>
        <taxon>Eukaryota</taxon>
        <taxon>Viridiplantae</taxon>
        <taxon>Streptophyta</taxon>
        <taxon>Embryophyta</taxon>
        <taxon>Tracheophyta</taxon>
        <taxon>Spermatophyta</taxon>
        <taxon>Magnoliopsida</taxon>
        <taxon>eudicotyledons</taxon>
        <taxon>Gunneridae</taxon>
        <taxon>Pentapetalae</taxon>
        <taxon>rosids</taxon>
        <taxon>malvids</taxon>
        <taxon>Brassicales</taxon>
        <taxon>Brassicaceae</taxon>
        <taxon>Camelineae</taxon>
        <taxon>Arabidopsis</taxon>
    </lineage>
</organism>
<proteinExistence type="evidence at protein level"/>